<gene>
    <name type="ordered locus">TTE2800</name>
</gene>
<feature type="chain" id="PRO_0000171891" description="Putative membrane protein insertion efficiency factor">
    <location>
        <begin position="1"/>
        <end position="69"/>
    </location>
</feature>
<organism>
    <name type="scientific">Caldanaerobacter subterraneus subsp. tengcongensis (strain DSM 15242 / JCM 11007 / NBRC 100824 / MB4)</name>
    <name type="common">Thermoanaerobacter tengcongensis</name>
    <dbReference type="NCBI Taxonomy" id="273068"/>
    <lineage>
        <taxon>Bacteria</taxon>
        <taxon>Bacillati</taxon>
        <taxon>Bacillota</taxon>
        <taxon>Clostridia</taxon>
        <taxon>Thermoanaerobacterales</taxon>
        <taxon>Thermoanaerobacteraceae</taxon>
        <taxon>Caldanaerobacter</taxon>
    </lineage>
</organism>
<protein>
    <recommendedName>
        <fullName evidence="1">Putative membrane protein insertion efficiency factor</fullName>
    </recommendedName>
</protein>
<comment type="function">
    <text evidence="1">Could be involved in insertion of integral membrane proteins into the membrane.</text>
</comment>
<comment type="subcellular location">
    <subcellularLocation>
        <location evidence="1">Cell membrane</location>
        <topology evidence="1">Peripheral membrane protein</topology>
        <orientation evidence="1">Cytoplasmic side</orientation>
    </subcellularLocation>
</comment>
<comment type="similarity">
    <text evidence="1">Belongs to the UPF0161 family.</text>
</comment>
<keyword id="KW-1003">Cell membrane</keyword>
<keyword id="KW-0472">Membrane</keyword>
<keyword id="KW-1185">Reference proteome</keyword>
<name>YIDD_CALS4</name>
<dbReference type="EMBL" id="AE008691">
    <property type="protein sequence ID" value="AAM25903.1"/>
    <property type="molecule type" value="Genomic_DNA"/>
</dbReference>
<dbReference type="STRING" id="273068.TTE2800"/>
<dbReference type="KEGG" id="tte:TTE2800"/>
<dbReference type="eggNOG" id="COG0759">
    <property type="taxonomic scope" value="Bacteria"/>
</dbReference>
<dbReference type="HOGENOM" id="CLU_144811_6_0_9"/>
<dbReference type="OrthoDB" id="9801753at2"/>
<dbReference type="Proteomes" id="UP000000555">
    <property type="component" value="Chromosome"/>
</dbReference>
<dbReference type="GO" id="GO:0005886">
    <property type="term" value="C:plasma membrane"/>
    <property type="evidence" value="ECO:0007669"/>
    <property type="project" value="UniProtKB-SubCell"/>
</dbReference>
<dbReference type="HAMAP" id="MF_00386">
    <property type="entry name" value="UPF0161_YidD"/>
    <property type="match status" value="1"/>
</dbReference>
<dbReference type="InterPro" id="IPR002696">
    <property type="entry name" value="Membr_insert_effic_factor_YidD"/>
</dbReference>
<dbReference type="NCBIfam" id="TIGR00278">
    <property type="entry name" value="membrane protein insertion efficiency factor YidD"/>
    <property type="match status" value="1"/>
</dbReference>
<dbReference type="PANTHER" id="PTHR33383">
    <property type="entry name" value="MEMBRANE PROTEIN INSERTION EFFICIENCY FACTOR-RELATED"/>
    <property type="match status" value="1"/>
</dbReference>
<dbReference type="PANTHER" id="PTHR33383:SF1">
    <property type="entry name" value="MEMBRANE PROTEIN INSERTION EFFICIENCY FACTOR-RELATED"/>
    <property type="match status" value="1"/>
</dbReference>
<dbReference type="Pfam" id="PF01809">
    <property type="entry name" value="YidD"/>
    <property type="match status" value="1"/>
</dbReference>
<dbReference type="SMART" id="SM01234">
    <property type="entry name" value="Haemolytic"/>
    <property type="match status" value="1"/>
</dbReference>
<sequence>MKNFVIFLIRLYQKYISPMKPRTCRFYPTCSQYSIEAISKYGLLKGGLMSIWRILRCNPFNPGGYDPVK</sequence>
<accession>Q8R6K5</accession>
<proteinExistence type="inferred from homology"/>
<reference key="1">
    <citation type="journal article" date="2002" name="Genome Res.">
        <title>A complete sequence of the T. tengcongensis genome.</title>
        <authorList>
            <person name="Bao Q."/>
            <person name="Tian Y."/>
            <person name="Li W."/>
            <person name="Xu Z."/>
            <person name="Xuan Z."/>
            <person name="Hu S."/>
            <person name="Dong W."/>
            <person name="Yang J."/>
            <person name="Chen Y."/>
            <person name="Xue Y."/>
            <person name="Xu Y."/>
            <person name="Lai X."/>
            <person name="Huang L."/>
            <person name="Dong X."/>
            <person name="Ma Y."/>
            <person name="Ling L."/>
            <person name="Tan H."/>
            <person name="Chen R."/>
            <person name="Wang J."/>
            <person name="Yu J."/>
            <person name="Yang H."/>
        </authorList>
    </citation>
    <scope>NUCLEOTIDE SEQUENCE [LARGE SCALE GENOMIC DNA]</scope>
    <source>
        <strain>DSM 15242 / JCM 11007 / NBRC 100824 / MB4</strain>
    </source>
</reference>
<evidence type="ECO:0000255" key="1">
    <source>
        <dbReference type="HAMAP-Rule" id="MF_00386"/>
    </source>
</evidence>